<proteinExistence type="inferred from homology"/>
<gene>
    <name evidence="1" type="primary">clpP</name>
    <name type="ordered locus">MGAS10750_Spy0324</name>
</gene>
<accession>Q1J887</accession>
<sequence length="196" mass="21649">MIPVVIEQTSRGERSYDIYSRLLKDRIIMLTGPVEDNMANSVIAQLLFLDAQDNTKDIYLYVNTPGGSVSAGLAIVDTMNFIKADVQTIVMGMAASMGTVIASSGTKGKRFMLPNAEYMIHQPMGGTGGGTQQTDMAIAAEHLLKTRHRLEKILAQNAGKTIKQIHKDAERDYWMSAEETLAYGFIDEIMENNELK</sequence>
<organism>
    <name type="scientific">Streptococcus pyogenes serotype M4 (strain MGAS10750)</name>
    <dbReference type="NCBI Taxonomy" id="370554"/>
    <lineage>
        <taxon>Bacteria</taxon>
        <taxon>Bacillati</taxon>
        <taxon>Bacillota</taxon>
        <taxon>Bacilli</taxon>
        <taxon>Lactobacillales</taxon>
        <taxon>Streptococcaceae</taxon>
        <taxon>Streptococcus</taxon>
    </lineage>
</organism>
<keyword id="KW-0963">Cytoplasm</keyword>
<keyword id="KW-0378">Hydrolase</keyword>
<keyword id="KW-0645">Protease</keyword>
<keyword id="KW-0720">Serine protease</keyword>
<comment type="function">
    <text evidence="1">Cleaves peptides in various proteins in a process that requires ATP hydrolysis. Has a chymotrypsin-like activity. Plays a major role in the degradation of misfolded proteins.</text>
</comment>
<comment type="catalytic activity">
    <reaction evidence="1">
        <text>Hydrolysis of proteins to small peptides in the presence of ATP and magnesium. alpha-casein is the usual test substrate. In the absence of ATP, only oligopeptides shorter than five residues are hydrolyzed (such as succinyl-Leu-Tyr-|-NHMec, and Leu-Tyr-Leu-|-Tyr-Trp, in which cleavage of the -Tyr-|-Leu- and -Tyr-|-Trp bonds also occurs).</text>
        <dbReference type="EC" id="3.4.21.92"/>
    </reaction>
</comment>
<comment type="subunit">
    <text evidence="1">Fourteen ClpP subunits assemble into 2 heptameric rings which stack back to back to give a disk-like structure with a central cavity, resembling the structure of eukaryotic proteasomes.</text>
</comment>
<comment type="subcellular location">
    <subcellularLocation>
        <location evidence="1">Cytoplasm</location>
    </subcellularLocation>
</comment>
<comment type="similarity">
    <text evidence="1">Belongs to the peptidase S14 family.</text>
</comment>
<dbReference type="EC" id="3.4.21.92" evidence="1"/>
<dbReference type="EMBL" id="CP000262">
    <property type="protein sequence ID" value="ABF37274.1"/>
    <property type="molecule type" value="Genomic_DNA"/>
</dbReference>
<dbReference type="SMR" id="Q1J887"/>
<dbReference type="MEROPS" id="S14.001"/>
<dbReference type="KEGG" id="spi:MGAS10750_Spy0324"/>
<dbReference type="HOGENOM" id="CLU_058707_3_2_9"/>
<dbReference type="Proteomes" id="UP000002434">
    <property type="component" value="Chromosome"/>
</dbReference>
<dbReference type="GO" id="GO:0005737">
    <property type="term" value="C:cytoplasm"/>
    <property type="evidence" value="ECO:0007669"/>
    <property type="project" value="UniProtKB-SubCell"/>
</dbReference>
<dbReference type="GO" id="GO:0009368">
    <property type="term" value="C:endopeptidase Clp complex"/>
    <property type="evidence" value="ECO:0007669"/>
    <property type="project" value="TreeGrafter"/>
</dbReference>
<dbReference type="GO" id="GO:0004176">
    <property type="term" value="F:ATP-dependent peptidase activity"/>
    <property type="evidence" value="ECO:0007669"/>
    <property type="project" value="InterPro"/>
</dbReference>
<dbReference type="GO" id="GO:0051117">
    <property type="term" value="F:ATPase binding"/>
    <property type="evidence" value="ECO:0007669"/>
    <property type="project" value="TreeGrafter"/>
</dbReference>
<dbReference type="GO" id="GO:0004252">
    <property type="term" value="F:serine-type endopeptidase activity"/>
    <property type="evidence" value="ECO:0007669"/>
    <property type="project" value="UniProtKB-UniRule"/>
</dbReference>
<dbReference type="GO" id="GO:0006515">
    <property type="term" value="P:protein quality control for misfolded or incompletely synthesized proteins"/>
    <property type="evidence" value="ECO:0007669"/>
    <property type="project" value="TreeGrafter"/>
</dbReference>
<dbReference type="CDD" id="cd07017">
    <property type="entry name" value="S14_ClpP_2"/>
    <property type="match status" value="1"/>
</dbReference>
<dbReference type="FunFam" id="3.90.226.10:FF:000014">
    <property type="entry name" value="ATP-dependent Clp protease proteolytic subunit"/>
    <property type="match status" value="1"/>
</dbReference>
<dbReference type="Gene3D" id="3.90.226.10">
    <property type="entry name" value="2-enoyl-CoA Hydratase, Chain A, domain 1"/>
    <property type="match status" value="1"/>
</dbReference>
<dbReference type="HAMAP" id="MF_00444">
    <property type="entry name" value="ClpP"/>
    <property type="match status" value="1"/>
</dbReference>
<dbReference type="InterPro" id="IPR001907">
    <property type="entry name" value="ClpP"/>
</dbReference>
<dbReference type="InterPro" id="IPR029045">
    <property type="entry name" value="ClpP/crotonase-like_dom_sf"/>
</dbReference>
<dbReference type="InterPro" id="IPR023562">
    <property type="entry name" value="ClpP/TepA"/>
</dbReference>
<dbReference type="InterPro" id="IPR033135">
    <property type="entry name" value="ClpP_His_AS"/>
</dbReference>
<dbReference type="InterPro" id="IPR018215">
    <property type="entry name" value="ClpP_Ser_AS"/>
</dbReference>
<dbReference type="NCBIfam" id="NF001368">
    <property type="entry name" value="PRK00277.1"/>
    <property type="match status" value="1"/>
</dbReference>
<dbReference type="NCBIfam" id="NF009205">
    <property type="entry name" value="PRK12553.1"/>
    <property type="match status" value="1"/>
</dbReference>
<dbReference type="PANTHER" id="PTHR10381">
    <property type="entry name" value="ATP-DEPENDENT CLP PROTEASE PROTEOLYTIC SUBUNIT"/>
    <property type="match status" value="1"/>
</dbReference>
<dbReference type="PANTHER" id="PTHR10381:SF70">
    <property type="entry name" value="ATP-DEPENDENT CLP PROTEASE PROTEOLYTIC SUBUNIT"/>
    <property type="match status" value="1"/>
</dbReference>
<dbReference type="Pfam" id="PF00574">
    <property type="entry name" value="CLP_protease"/>
    <property type="match status" value="1"/>
</dbReference>
<dbReference type="PRINTS" id="PR00127">
    <property type="entry name" value="CLPPROTEASEP"/>
</dbReference>
<dbReference type="SUPFAM" id="SSF52096">
    <property type="entry name" value="ClpP/crotonase"/>
    <property type="match status" value="1"/>
</dbReference>
<dbReference type="PROSITE" id="PS00382">
    <property type="entry name" value="CLP_PROTEASE_HIS"/>
    <property type="match status" value="1"/>
</dbReference>
<dbReference type="PROSITE" id="PS00381">
    <property type="entry name" value="CLP_PROTEASE_SER"/>
    <property type="match status" value="1"/>
</dbReference>
<protein>
    <recommendedName>
        <fullName evidence="1">ATP-dependent Clp protease proteolytic subunit</fullName>
        <ecNumber evidence="1">3.4.21.92</ecNumber>
    </recommendedName>
    <alternativeName>
        <fullName evidence="1">Endopeptidase Clp</fullName>
    </alternativeName>
</protein>
<name>CLPP_STRPF</name>
<feature type="chain" id="PRO_0000252855" description="ATP-dependent Clp protease proteolytic subunit">
    <location>
        <begin position="1"/>
        <end position="196"/>
    </location>
</feature>
<feature type="active site" description="Nucleophile" evidence="1">
    <location>
        <position position="96"/>
    </location>
</feature>
<feature type="active site" evidence="1">
    <location>
        <position position="121"/>
    </location>
</feature>
<reference key="1">
    <citation type="journal article" date="2006" name="Proc. Natl. Acad. Sci. U.S.A.">
        <title>Molecular genetic anatomy of inter- and intraserotype variation in the human bacterial pathogen group A Streptococcus.</title>
        <authorList>
            <person name="Beres S.B."/>
            <person name="Richter E.W."/>
            <person name="Nagiec M.J."/>
            <person name="Sumby P."/>
            <person name="Porcella S.F."/>
            <person name="DeLeo F.R."/>
            <person name="Musser J.M."/>
        </authorList>
    </citation>
    <scope>NUCLEOTIDE SEQUENCE [LARGE SCALE GENOMIC DNA]</scope>
    <source>
        <strain>MGAS10750</strain>
    </source>
</reference>
<evidence type="ECO:0000255" key="1">
    <source>
        <dbReference type="HAMAP-Rule" id="MF_00444"/>
    </source>
</evidence>